<proteinExistence type="inferred from homology"/>
<gene>
    <name evidence="1" type="primary">fabH</name>
    <name type="ordered locus">SACOL0987</name>
</gene>
<accession>Q5HHA2</accession>
<protein>
    <recommendedName>
        <fullName evidence="1">Beta-ketoacyl-[acyl-carrier-protein] synthase III</fullName>
        <shortName evidence="1">Beta-ketoacyl-ACP synthase III</shortName>
        <shortName evidence="1">KAS III</shortName>
        <ecNumber evidence="1">2.3.1.180</ecNumber>
    </recommendedName>
    <alternativeName>
        <fullName evidence="1">3-oxoacyl-[acyl-carrier-protein] synthase 3</fullName>
    </alternativeName>
    <alternativeName>
        <fullName evidence="1">3-oxoacyl-[acyl-carrier-protein] synthase III</fullName>
    </alternativeName>
</protein>
<comment type="function">
    <text evidence="1">Catalyzes the condensation reaction of fatty acid synthesis by the addition to an acyl acceptor of two carbons from malonyl-ACP. Catalyzes the first condensation reaction which initiates fatty acid synthesis and may therefore play a role in governing the total rate of fatty acid production. Possesses both acetoacetyl-ACP synthase and acetyl transacylase activities. Its substrate specificity determines the biosynthesis of branched-chain and/or straight-chain of fatty acids.</text>
</comment>
<comment type="catalytic activity">
    <reaction evidence="1">
        <text>malonyl-[ACP] + acetyl-CoA + H(+) = 3-oxobutanoyl-[ACP] + CO2 + CoA</text>
        <dbReference type="Rhea" id="RHEA:12080"/>
        <dbReference type="Rhea" id="RHEA-COMP:9623"/>
        <dbReference type="Rhea" id="RHEA-COMP:9625"/>
        <dbReference type="ChEBI" id="CHEBI:15378"/>
        <dbReference type="ChEBI" id="CHEBI:16526"/>
        <dbReference type="ChEBI" id="CHEBI:57287"/>
        <dbReference type="ChEBI" id="CHEBI:57288"/>
        <dbReference type="ChEBI" id="CHEBI:78449"/>
        <dbReference type="ChEBI" id="CHEBI:78450"/>
        <dbReference type="EC" id="2.3.1.180"/>
    </reaction>
</comment>
<comment type="pathway">
    <text evidence="1">Lipid metabolism; fatty acid biosynthesis.</text>
</comment>
<comment type="subunit">
    <text evidence="1">Homodimer.</text>
</comment>
<comment type="subcellular location">
    <subcellularLocation>
        <location evidence="1">Cytoplasm</location>
    </subcellularLocation>
</comment>
<comment type="domain">
    <text evidence="1">The last Arg residue of the ACP-binding site is essential for the weak association between ACP/AcpP and FabH.</text>
</comment>
<comment type="similarity">
    <text evidence="1">Belongs to the thiolase-like superfamily. FabH family.</text>
</comment>
<keyword id="KW-0012">Acyltransferase</keyword>
<keyword id="KW-0963">Cytoplasm</keyword>
<keyword id="KW-0275">Fatty acid biosynthesis</keyword>
<keyword id="KW-0276">Fatty acid metabolism</keyword>
<keyword id="KW-0444">Lipid biosynthesis</keyword>
<keyword id="KW-0443">Lipid metabolism</keyword>
<keyword id="KW-0511">Multifunctional enzyme</keyword>
<keyword id="KW-0808">Transferase</keyword>
<feature type="chain" id="PRO_0000110468" description="Beta-ketoacyl-[acyl-carrier-protein] synthase III">
    <location>
        <begin position="1"/>
        <end position="313"/>
    </location>
</feature>
<feature type="region of interest" description="ACP-binding" evidence="1">
    <location>
        <begin position="239"/>
        <end position="243"/>
    </location>
</feature>
<feature type="active site" evidence="1">
    <location>
        <position position="112"/>
    </location>
</feature>
<feature type="active site" evidence="1">
    <location>
        <position position="238"/>
    </location>
</feature>
<feature type="active site" evidence="1">
    <location>
        <position position="268"/>
    </location>
</feature>
<dbReference type="EC" id="2.3.1.180" evidence="1"/>
<dbReference type="EMBL" id="CP000046">
    <property type="protein sequence ID" value="AAW36455.1"/>
    <property type="molecule type" value="Genomic_DNA"/>
</dbReference>
<dbReference type="RefSeq" id="WP_001100525.1">
    <property type="nucleotide sequence ID" value="NZ_JBGOFO010000002.1"/>
</dbReference>
<dbReference type="SMR" id="Q5HHA2"/>
<dbReference type="KEGG" id="sac:SACOL0987"/>
<dbReference type="HOGENOM" id="CLU_039592_3_1_9"/>
<dbReference type="UniPathway" id="UPA00094"/>
<dbReference type="Proteomes" id="UP000000530">
    <property type="component" value="Chromosome"/>
</dbReference>
<dbReference type="GO" id="GO:0005737">
    <property type="term" value="C:cytoplasm"/>
    <property type="evidence" value="ECO:0007669"/>
    <property type="project" value="UniProtKB-SubCell"/>
</dbReference>
<dbReference type="GO" id="GO:0004315">
    <property type="term" value="F:3-oxoacyl-[acyl-carrier-protein] synthase activity"/>
    <property type="evidence" value="ECO:0007669"/>
    <property type="project" value="InterPro"/>
</dbReference>
<dbReference type="GO" id="GO:0033818">
    <property type="term" value="F:beta-ketoacyl-acyl-carrier-protein synthase III activity"/>
    <property type="evidence" value="ECO:0007669"/>
    <property type="project" value="UniProtKB-UniRule"/>
</dbReference>
<dbReference type="GO" id="GO:0006633">
    <property type="term" value="P:fatty acid biosynthetic process"/>
    <property type="evidence" value="ECO:0007669"/>
    <property type="project" value="UniProtKB-UniRule"/>
</dbReference>
<dbReference type="CDD" id="cd00830">
    <property type="entry name" value="KAS_III"/>
    <property type="match status" value="1"/>
</dbReference>
<dbReference type="FunFam" id="3.40.47.10:FF:000004">
    <property type="entry name" value="3-oxoacyl-[acyl-carrier-protein] synthase 3"/>
    <property type="match status" value="1"/>
</dbReference>
<dbReference type="Gene3D" id="3.40.47.10">
    <property type="match status" value="1"/>
</dbReference>
<dbReference type="HAMAP" id="MF_01815">
    <property type="entry name" value="FabH"/>
    <property type="match status" value="1"/>
</dbReference>
<dbReference type="InterPro" id="IPR013747">
    <property type="entry name" value="ACP_syn_III_C"/>
</dbReference>
<dbReference type="InterPro" id="IPR013751">
    <property type="entry name" value="ACP_syn_III_N"/>
</dbReference>
<dbReference type="InterPro" id="IPR004655">
    <property type="entry name" value="FabH"/>
</dbReference>
<dbReference type="InterPro" id="IPR016039">
    <property type="entry name" value="Thiolase-like"/>
</dbReference>
<dbReference type="NCBIfam" id="TIGR00747">
    <property type="entry name" value="fabH"/>
    <property type="match status" value="1"/>
</dbReference>
<dbReference type="NCBIfam" id="NF006829">
    <property type="entry name" value="PRK09352.1"/>
    <property type="match status" value="1"/>
</dbReference>
<dbReference type="PANTHER" id="PTHR43091">
    <property type="entry name" value="3-OXOACYL-[ACYL-CARRIER-PROTEIN] SYNTHASE"/>
    <property type="match status" value="1"/>
</dbReference>
<dbReference type="PANTHER" id="PTHR43091:SF1">
    <property type="entry name" value="BETA-KETOACYL-[ACYL-CARRIER-PROTEIN] SYNTHASE III, CHLOROPLASTIC"/>
    <property type="match status" value="1"/>
</dbReference>
<dbReference type="Pfam" id="PF08545">
    <property type="entry name" value="ACP_syn_III"/>
    <property type="match status" value="1"/>
</dbReference>
<dbReference type="Pfam" id="PF08541">
    <property type="entry name" value="ACP_syn_III_C"/>
    <property type="match status" value="1"/>
</dbReference>
<dbReference type="SUPFAM" id="SSF53901">
    <property type="entry name" value="Thiolase-like"/>
    <property type="match status" value="1"/>
</dbReference>
<sequence>MNVGIKGFGAYAPEKIIDNAYFEQFLDTSDEWISKMTGIKERHWADDDQDTSDLAYEASLKAIADAGIQPEDIDMIIVATATGDMPFPTVANMLQERLGTGKVASMDQLAACSGFMYSMITAKQYVQSGDYHNILVVGADKLSKITDLTDRSTAVLFGDGAGAVIIGEVSDGRGIISYEMGSDGTGGKHLYLDKDTGKLKMNGREVFKFAVRIMGDASTRVVEKANLTSDDIDLFIPHQANIRIMESARERLGISKDKMSVSVNKYGNTSAASIPLSIDQELKNGKIKDDDTIVLVGFGGGLTWGAMTIKWGK</sequence>
<reference key="1">
    <citation type="journal article" date="2005" name="J. Bacteriol.">
        <title>Insights on evolution of virulence and resistance from the complete genome analysis of an early methicillin-resistant Staphylococcus aureus strain and a biofilm-producing methicillin-resistant Staphylococcus epidermidis strain.</title>
        <authorList>
            <person name="Gill S.R."/>
            <person name="Fouts D.E."/>
            <person name="Archer G.L."/>
            <person name="Mongodin E.F."/>
            <person name="DeBoy R.T."/>
            <person name="Ravel J."/>
            <person name="Paulsen I.T."/>
            <person name="Kolonay J.F."/>
            <person name="Brinkac L.M."/>
            <person name="Beanan M.J."/>
            <person name="Dodson R.J."/>
            <person name="Daugherty S.C."/>
            <person name="Madupu R."/>
            <person name="Angiuoli S.V."/>
            <person name="Durkin A.S."/>
            <person name="Haft D.H."/>
            <person name="Vamathevan J.J."/>
            <person name="Khouri H."/>
            <person name="Utterback T.R."/>
            <person name="Lee C."/>
            <person name="Dimitrov G."/>
            <person name="Jiang L."/>
            <person name="Qin H."/>
            <person name="Weidman J."/>
            <person name="Tran K."/>
            <person name="Kang K.H."/>
            <person name="Hance I.R."/>
            <person name="Nelson K.E."/>
            <person name="Fraser C.M."/>
        </authorList>
    </citation>
    <scope>NUCLEOTIDE SEQUENCE [LARGE SCALE GENOMIC DNA]</scope>
    <source>
        <strain>COL</strain>
    </source>
</reference>
<name>FABH_STAAC</name>
<evidence type="ECO:0000255" key="1">
    <source>
        <dbReference type="HAMAP-Rule" id="MF_01815"/>
    </source>
</evidence>
<organism>
    <name type="scientific">Staphylococcus aureus (strain COL)</name>
    <dbReference type="NCBI Taxonomy" id="93062"/>
    <lineage>
        <taxon>Bacteria</taxon>
        <taxon>Bacillati</taxon>
        <taxon>Bacillota</taxon>
        <taxon>Bacilli</taxon>
        <taxon>Bacillales</taxon>
        <taxon>Staphylococcaceae</taxon>
        <taxon>Staphylococcus</taxon>
    </lineage>
</organism>